<organism>
    <name type="scientific">Caulobacter vibrioides (strain ATCC 19089 / CIP 103742 / CB 15)</name>
    <name type="common">Caulobacter crescentus</name>
    <dbReference type="NCBI Taxonomy" id="190650"/>
    <lineage>
        <taxon>Bacteria</taxon>
        <taxon>Pseudomonadati</taxon>
        <taxon>Pseudomonadota</taxon>
        <taxon>Alphaproteobacteria</taxon>
        <taxon>Caulobacterales</taxon>
        <taxon>Caulobacteraceae</taxon>
        <taxon>Caulobacter</taxon>
    </lineage>
</organism>
<protein>
    <recommendedName>
        <fullName evidence="1">6,7-dimethyl-8-ribityllumazine synthase 1</fullName>
        <shortName evidence="1">DMRL synthase 1</shortName>
        <shortName evidence="1">LS 1</shortName>
        <shortName evidence="1">Lumazine synthase 1</shortName>
        <ecNumber evidence="1">2.5.1.78</ecNumber>
    </recommendedName>
</protein>
<feature type="chain" id="PRO_0000134735" description="6,7-dimethyl-8-ribityllumazine synthase 1">
    <location>
        <begin position="1"/>
        <end position="153"/>
    </location>
</feature>
<feature type="active site" description="Proton donor" evidence="1">
    <location>
        <position position="82"/>
    </location>
</feature>
<feature type="binding site" evidence="1">
    <location>
        <position position="16"/>
    </location>
    <ligand>
        <name>5-amino-6-(D-ribitylamino)uracil</name>
        <dbReference type="ChEBI" id="CHEBI:15934"/>
    </ligand>
</feature>
<feature type="binding site" evidence="1">
    <location>
        <begin position="50"/>
        <end position="52"/>
    </location>
    <ligand>
        <name>5-amino-6-(D-ribitylamino)uracil</name>
        <dbReference type="ChEBI" id="CHEBI:15934"/>
    </ligand>
</feature>
<feature type="binding site" evidence="1">
    <location>
        <begin position="74"/>
        <end position="76"/>
    </location>
    <ligand>
        <name>5-amino-6-(D-ribitylamino)uracil</name>
        <dbReference type="ChEBI" id="CHEBI:15934"/>
    </ligand>
</feature>
<feature type="binding site" evidence="1">
    <location>
        <begin position="79"/>
        <end position="80"/>
    </location>
    <ligand>
        <name>(2S)-2-hydroxy-3-oxobutyl phosphate</name>
        <dbReference type="ChEBI" id="CHEBI:58830"/>
    </ligand>
</feature>
<feature type="binding site" evidence="1">
    <location>
        <position position="107"/>
    </location>
    <ligand>
        <name>5-amino-6-(D-ribitylamino)uracil</name>
        <dbReference type="ChEBI" id="CHEBI:15934"/>
    </ligand>
</feature>
<feature type="binding site" evidence="1">
    <location>
        <position position="121"/>
    </location>
    <ligand>
        <name>(2S)-2-hydroxy-3-oxobutyl phosphate</name>
        <dbReference type="ChEBI" id="CHEBI:58830"/>
    </ligand>
</feature>
<accession>Q9A9S4</accession>
<keyword id="KW-1185">Reference proteome</keyword>
<keyword id="KW-0686">Riboflavin biosynthesis</keyword>
<keyword id="KW-0808">Transferase</keyword>
<proteinExistence type="inferred from homology"/>
<comment type="function">
    <text evidence="1">Catalyzes the formation of 6,7-dimethyl-8-ribityllumazine by condensation of 5-amino-6-(D-ribitylamino)uracil with 3,4-dihydroxy-2-butanone 4-phosphate. This is the penultimate step in the biosynthesis of riboflavin.</text>
</comment>
<comment type="catalytic activity">
    <reaction evidence="1">
        <text>(2S)-2-hydroxy-3-oxobutyl phosphate + 5-amino-6-(D-ribitylamino)uracil = 6,7-dimethyl-8-(1-D-ribityl)lumazine + phosphate + 2 H2O + H(+)</text>
        <dbReference type="Rhea" id="RHEA:26152"/>
        <dbReference type="ChEBI" id="CHEBI:15377"/>
        <dbReference type="ChEBI" id="CHEBI:15378"/>
        <dbReference type="ChEBI" id="CHEBI:15934"/>
        <dbReference type="ChEBI" id="CHEBI:43474"/>
        <dbReference type="ChEBI" id="CHEBI:58201"/>
        <dbReference type="ChEBI" id="CHEBI:58830"/>
        <dbReference type="EC" id="2.5.1.78"/>
    </reaction>
</comment>
<comment type="pathway">
    <text evidence="1">Cofactor biosynthesis; riboflavin biosynthesis; riboflavin from 2-hydroxy-3-oxobutyl phosphate and 5-amino-6-(D-ribitylamino)uracil: step 1/2.</text>
</comment>
<comment type="similarity">
    <text evidence="1">Belongs to the DMRL synthase family.</text>
</comment>
<gene>
    <name evidence="1" type="primary">ribH1</name>
    <name type="ordered locus">CC_0888</name>
</gene>
<reference key="1">
    <citation type="journal article" date="2001" name="Proc. Natl. Acad. Sci. U.S.A.">
        <title>Complete genome sequence of Caulobacter crescentus.</title>
        <authorList>
            <person name="Nierman W.C."/>
            <person name="Feldblyum T.V."/>
            <person name="Laub M.T."/>
            <person name="Paulsen I.T."/>
            <person name="Nelson K.E."/>
            <person name="Eisen J.A."/>
            <person name="Heidelberg J.F."/>
            <person name="Alley M.R.K."/>
            <person name="Ohta N."/>
            <person name="Maddock J.R."/>
            <person name="Potocka I."/>
            <person name="Nelson W.C."/>
            <person name="Newton A."/>
            <person name="Stephens C."/>
            <person name="Phadke N.D."/>
            <person name="Ely B."/>
            <person name="DeBoy R.T."/>
            <person name="Dodson R.J."/>
            <person name="Durkin A.S."/>
            <person name="Gwinn M.L."/>
            <person name="Haft D.H."/>
            <person name="Kolonay J.F."/>
            <person name="Smit J."/>
            <person name="Craven M.B."/>
            <person name="Khouri H.M."/>
            <person name="Shetty J."/>
            <person name="Berry K.J."/>
            <person name="Utterback T.R."/>
            <person name="Tran K."/>
            <person name="Wolf A.M."/>
            <person name="Vamathevan J.J."/>
            <person name="Ermolaeva M.D."/>
            <person name="White O."/>
            <person name="Salzberg S.L."/>
            <person name="Venter J.C."/>
            <person name="Shapiro L."/>
            <person name="Fraser C.M."/>
        </authorList>
    </citation>
    <scope>NUCLEOTIDE SEQUENCE [LARGE SCALE GENOMIC DNA]</scope>
    <source>
        <strain>ATCC 19089 / CIP 103742 / CB 15</strain>
    </source>
</reference>
<sequence>MTDPVPPRIAIVVSQFNPEVTDGLLKGALDHLAAQGAPVAAPDIIAAPGAYELPLIAQTLARTGRYAGVVCLGCVIKGETAHFEFISLGASLGLMAAGLQTETPVSFGVLTTYTDEQAVARSRDDAENKGREAANACLSTVQTLRRIRENALA</sequence>
<dbReference type="EC" id="2.5.1.78" evidence="1"/>
<dbReference type="EMBL" id="AE005673">
    <property type="protein sequence ID" value="AAK22873.1"/>
    <property type="molecule type" value="Genomic_DNA"/>
</dbReference>
<dbReference type="PIR" id="E87359">
    <property type="entry name" value="E87359"/>
</dbReference>
<dbReference type="RefSeq" id="NP_419705.1">
    <property type="nucleotide sequence ID" value="NC_002696.2"/>
</dbReference>
<dbReference type="RefSeq" id="WP_010918773.1">
    <property type="nucleotide sequence ID" value="NC_002696.2"/>
</dbReference>
<dbReference type="SMR" id="Q9A9S4"/>
<dbReference type="STRING" id="190650.CC_0888"/>
<dbReference type="EnsemblBacteria" id="AAK22873">
    <property type="protein sequence ID" value="AAK22873"/>
    <property type="gene ID" value="CC_0888"/>
</dbReference>
<dbReference type="KEGG" id="ccr:CC_0888"/>
<dbReference type="PATRIC" id="fig|190650.5.peg.901"/>
<dbReference type="eggNOG" id="COG0054">
    <property type="taxonomic scope" value="Bacteria"/>
</dbReference>
<dbReference type="HOGENOM" id="CLU_089358_1_2_5"/>
<dbReference type="BioCyc" id="CAULO:CC0888-MONOMER"/>
<dbReference type="BRENDA" id="2.5.1.78">
    <property type="organism ID" value="1218"/>
</dbReference>
<dbReference type="UniPathway" id="UPA00275">
    <property type="reaction ID" value="UER00404"/>
</dbReference>
<dbReference type="Proteomes" id="UP000001816">
    <property type="component" value="Chromosome"/>
</dbReference>
<dbReference type="GO" id="GO:0005829">
    <property type="term" value="C:cytosol"/>
    <property type="evidence" value="ECO:0007669"/>
    <property type="project" value="TreeGrafter"/>
</dbReference>
<dbReference type="GO" id="GO:0009349">
    <property type="term" value="C:riboflavin synthase complex"/>
    <property type="evidence" value="ECO:0007669"/>
    <property type="project" value="InterPro"/>
</dbReference>
<dbReference type="GO" id="GO:0000906">
    <property type="term" value="F:6,7-dimethyl-8-ribityllumazine synthase activity"/>
    <property type="evidence" value="ECO:0007669"/>
    <property type="project" value="UniProtKB-UniRule"/>
</dbReference>
<dbReference type="GO" id="GO:0009231">
    <property type="term" value="P:riboflavin biosynthetic process"/>
    <property type="evidence" value="ECO:0007669"/>
    <property type="project" value="UniProtKB-UniRule"/>
</dbReference>
<dbReference type="CDD" id="cd09209">
    <property type="entry name" value="Lumazine_synthase-I"/>
    <property type="match status" value="1"/>
</dbReference>
<dbReference type="Gene3D" id="3.40.50.960">
    <property type="entry name" value="Lumazine/riboflavin synthase"/>
    <property type="match status" value="1"/>
</dbReference>
<dbReference type="HAMAP" id="MF_00178">
    <property type="entry name" value="Lumazine_synth"/>
    <property type="match status" value="1"/>
</dbReference>
<dbReference type="InterPro" id="IPR034964">
    <property type="entry name" value="LS"/>
</dbReference>
<dbReference type="InterPro" id="IPR002180">
    <property type="entry name" value="LS/RS"/>
</dbReference>
<dbReference type="InterPro" id="IPR036467">
    <property type="entry name" value="LS/RS_sf"/>
</dbReference>
<dbReference type="NCBIfam" id="TIGR00114">
    <property type="entry name" value="lumazine-synth"/>
    <property type="match status" value="1"/>
</dbReference>
<dbReference type="PANTHER" id="PTHR21058:SF0">
    <property type="entry name" value="6,7-DIMETHYL-8-RIBITYLLUMAZINE SYNTHASE"/>
    <property type="match status" value="1"/>
</dbReference>
<dbReference type="PANTHER" id="PTHR21058">
    <property type="entry name" value="6,7-DIMETHYL-8-RIBITYLLUMAZINE SYNTHASE DMRL SYNTHASE LUMAZINE SYNTHASE"/>
    <property type="match status" value="1"/>
</dbReference>
<dbReference type="Pfam" id="PF00885">
    <property type="entry name" value="DMRL_synthase"/>
    <property type="match status" value="1"/>
</dbReference>
<dbReference type="SUPFAM" id="SSF52121">
    <property type="entry name" value="Lumazine synthase"/>
    <property type="match status" value="1"/>
</dbReference>
<evidence type="ECO:0000255" key="1">
    <source>
        <dbReference type="HAMAP-Rule" id="MF_00178"/>
    </source>
</evidence>
<name>RISB1_CAUVC</name>